<keyword id="KW-0687">Ribonucleoprotein</keyword>
<keyword id="KW-0689">Ribosomal protein</keyword>
<keyword id="KW-0694">RNA-binding</keyword>
<keyword id="KW-0699">rRNA-binding</keyword>
<keyword id="KW-0820">tRNA-binding</keyword>
<sequence length="120" mass="13360">MARIAGVNIPNNAHIVIGLQAIYGIGATRAKLICEAANIAPDTKAKDLDETQLDALRDQVAKYEVEGDLRREVTMSIKRLMDMGCYRGFRHRRGLPCRGQRTRTNARTRKGPRKAIAGKK</sequence>
<organism>
    <name type="scientific">Neisseria meningitidis serogroup C (strain 053442)</name>
    <dbReference type="NCBI Taxonomy" id="374833"/>
    <lineage>
        <taxon>Bacteria</taxon>
        <taxon>Pseudomonadati</taxon>
        <taxon>Pseudomonadota</taxon>
        <taxon>Betaproteobacteria</taxon>
        <taxon>Neisseriales</taxon>
        <taxon>Neisseriaceae</taxon>
        <taxon>Neisseria</taxon>
    </lineage>
</organism>
<proteinExistence type="inferred from homology"/>
<dbReference type="EMBL" id="CP000381">
    <property type="protein sequence ID" value="ABX74110.1"/>
    <property type="molecule type" value="Genomic_DNA"/>
</dbReference>
<dbReference type="RefSeq" id="WP_002215453.1">
    <property type="nucleotide sequence ID" value="NC_010120.1"/>
</dbReference>
<dbReference type="SMR" id="A9M3U3"/>
<dbReference type="GeneID" id="93387240"/>
<dbReference type="KEGG" id="nmn:NMCC_1987"/>
<dbReference type="HOGENOM" id="CLU_103849_1_2_4"/>
<dbReference type="Proteomes" id="UP000001177">
    <property type="component" value="Chromosome"/>
</dbReference>
<dbReference type="GO" id="GO:0005829">
    <property type="term" value="C:cytosol"/>
    <property type="evidence" value="ECO:0007669"/>
    <property type="project" value="TreeGrafter"/>
</dbReference>
<dbReference type="GO" id="GO:0015935">
    <property type="term" value="C:small ribosomal subunit"/>
    <property type="evidence" value="ECO:0007669"/>
    <property type="project" value="TreeGrafter"/>
</dbReference>
<dbReference type="GO" id="GO:0019843">
    <property type="term" value="F:rRNA binding"/>
    <property type="evidence" value="ECO:0007669"/>
    <property type="project" value="UniProtKB-UniRule"/>
</dbReference>
<dbReference type="GO" id="GO:0003735">
    <property type="term" value="F:structural constituent of ribosome"/>
    <property type="evidence" value="ECO:0007669"/>
    <property type="project" value="InterPro"/>
</dbReference>
<dbReference type="GO" id="GO:0000049">
    <property type="term" value="F:tRNA binding"/>
    <property type="evidence" value="ECO:0007669"/>
    <property type="project" value="UniProtKB-UniRule"/>
</dbReference>
<dbReference type="GO" id="GO:0006412">
    <property type="term" value="P:translation"/>
    <property type="evidence" value="ECO:0007669"/>
    <property type="project" value="UniProtKB-UniRule"/>
</dbReference>
<dbReference type="FunFam" id="1.10.8.50:FF:000001">
    <property type="entry name" value="30S ribosomal protein S13"/>
    <property type="match status" value="1"/>
</dbReference>
<dbReference type="FunFam" id="4.10.910.10:FF:000001">
    <property type="entry name" value="30S ribosomal protein S13"/>
    <property type="match status" value="1"/>
</dbReference>
<dbReference type="Gene3D" id="1.10.8.50">
    <property type="match status" value="1"/>
</dbReference>
<dbReference type="Gene3D" id="4.10.910.10">
    <property type="entry name" value="30s ribosomal protein s13, domain 2"/>
    <property type="match status" value="1"/>
</dbReference>
<dbReference type="HAMAP" id="MF_01315">
    <property type="entry name" value="Ribosomal_uS13"/>
    <property type="match status" value="1"/>
</dbReference>
<dbReference type="InterPro" id="IPR027437">
    <property type="entry name" value="Rbsml_uS13_C"/>
</dbReference>
<dbReference type="InterPro" id="IPR001892">
    <property type="entry name" value="Ribosomal_uS13"/>
</dbReference>
<dbReference type="InterPro" id="IPR010979">
    <property type="entry name" value="Ribosomal_uS13-like_H2TH"/>
</dbReference>
<dbReference type="InterPro" id="IPR019980">
    <property type="entry name" value="Ribosomal_uS13_bac-type"/>
</dbReference>
<dbReference type="InterPro" id="IPR018269">
    <property type="entry name" value="Ribosomal_uS13_CS"/>
</dbReference>
<dbReference type="NCBIfam" id="TIGR03631">
    <property type="entry name" value="uS13_bact"/>
    <property type="match status" value="1"/>
</dbReference>
<dbReference type="PANTHER" id="PTHR10871">
    <property type="entry name" value="30S RIBOSOMAL PROTEIN S13/40S RIBOSOMAL PROTEIN S18"/>
    <property type="match status" value="1"/>
</dbReference>
<dbReference type="PANTHER" id="PTHR10871:SF1">
    <property type="entry name" value="SMALL RIBOSOMAL SUBUNIT PROTEIN US13M"/>
    <property type="match status" value="1"/>
</dbReference>
<dbReference type="Pfam" id="PF00416">
    <property type="entry name" value="Ribosomal_S13"/>
    <property type="match status" value="1"/>
</dbReference>
<dbReference type="PIRSF" id="PIRSF002134">
    <property type="entry name" value="Ribosomal_S13"/>
    <property type="match status" value="1"/>
</dbReference>
<dbReference type="SUPFAM" id="SSF46946">
    <property type="entry name" value="S13-like H2TH domain"/>
    <property type="match status" value="1"/>
</dbReference>
<dbReference type="PROSITE" id="PS00646">
    <property type="entry name" value="RIBOSOMAL_S13_1"/>
    <property type="match status" value="1"/>
</dbReference>
<dbReference type="PROSITE" id="PS50159">
    <property type="entry name" value="RIBOSOMAL_S13_2"/>
    <property type="match status" value="1"/>
</dbReference>
<gene>
    <name evidence="1" type="primary">rpsM</name>
    <name type="ordered locus">NMCC_1987</name>
</gene>
<accession>A9M3U3</accession>
<comment type="function">
    <text evidence="1">Located at the top of the head of the 30S subunit, it contacts several helices of the 16S rRNA. In the 70S ribosome it contacts the 23S rRNA (bridge B1a) and protein L5 of the 50S subunit (bridge B1b), connecting the 2 subunits; these bridges are implicated in subunit movement. Contacts the tRNAs in the A and P-sites.</text>
</comment>
<comment type="subunit">
    <text evidence="1">Part of the 30S ribosomal subunit. Forms a loose heterodimer with protein S19. Forms two bridges to the 50S subunit in the 70S ribosome.</text>
</comment>
<comment type="similarity">
    <text evidence="1">Belongs to the universal ribosomal protein uS13 family.</text>
</comment>
<evidence type="ECO:0000255" key="1">
    <source>
        <dbReference type="HAMAP-Rule" id="MF_01315"/>
    </source>
</evidence>
<evidence type="ECO:0000256" key="2">
    <source>
        <dbReference type="SAM" id="MobiDB-lite"/>
    </source>
</evidence>
<evidence type="ECO:0000305" key="3"/>
<reference key="1">
    <citation type="journal article" date="2008" name="Genomics">
        <title>Characterization of ST-4821 complex, a unique Neisseria meningitidis clone.</title>
        <authorList>
            <person name="Peng J."/>
            <person name="Yang L."/>
            <person name="Yang F."/>
            <person name="Yang J."/>
            <person name="Yan Y."/>
            <person name="Nie H."/>
            <person name="Zhang X."/>
            <person name="Xiong Z."/>
            <person name="Jiang Y."/>
            <person name="Cheng F."/>
            <person name="Xu X."/>
            <person name="Chen S."/>
            <person name="Sun L."/>
            <person name="Li W."/>
            <person name="Shen Y."/>
            <person name="Shao Z."/>
            <person name="Liang X."/>
            <person name="Xu J."/>
            <person name="Jin Q."/>
        </authorList>
    </citation>
    <scope>NUCLEOTIDE SEQUENCE [LARGE SCALE GENOMIC DNA]</scope>
    <source>
        <strain>053442</strain>
    </source>
</reference>
<name>RS13_NEIM0</name>
<feature type="chain" id="PRO_1000086247" description="Small ribosomal subunit protein uS13">
    <location>
        <begin position="1"/>
        <end position="120"/>
    </location>
</feature>
<feature type="region of interest" description="Disordered" evidence="2">
    <location>
        <begin position="96"/>
        <end position="120"/>
    </location>
</feature>
<protein>
    <recommendedName>
        <fullName evidence="1">Small ribosomal subunit protein uS13</fullName>
    </recommendedName>
    <alternativeName>
        <fullName evidence="3">30S ribosomal protein S13</fullName>
    </alternativeName>
</protein>